<accession>Q1B627</accession>
<protein>
    <recommendedName>
        <fullName evidence="1">Large ribosomal subunit protein bL21</fullName>
    </recommendedName>
    <alternativeName>
        <fullName evidence="2">50S ribosomal protein L21</fullName>
    </alternativeName>
</protein>
<proteinExistence type="inferred from homology"/>
<reference key="1">
    <citation type="submission" date="2006-06" db="EMBL/GenBank/DDBJ databases">
        <title>Complete sequence of chromosome of Mycobacterium sp. MCS.</title>
        <authorList>
            <consortium name="US DOE Joint Genome Institute"/>
            <person name="Copeland A."/>
            <person name="Lucas S."/>
            <person name="Lapidus A."/>
            <person name="Barry K."/>
            <person name="Detter J.C."/>
            <person name="Glavina del Rio T."/>
            <person name="Hammon N."/>
            <person name="Israni S."/>
            <person name="Dalin E."/>
            <person name="Tice H."/>
            <person name="Pitluck S."/>
            <person name="Martinez M."/>
            <person name="Schmutz J."/>
            <person name="Larimer F."/>
            <person name="Land M."/>
            <person name="Hauser L."/>
            <person name="Kyrpides N."/>
            <person name="Kim E."/>
            <person name="Miller C.D."/>
            <person name="Hughes J.E."/>
            <person name="Anderson A.J."/>
            <person name="Sims R.C."/>
            <person name="Richardson P."/>
        </authorList>
    </citation>
    <scope>NUCLEOTIDE SEQUENCE [LARGE SCALE GENOMIC DNA]</scope>
    <source>
        <strain>MCS</strain>
    </source>
</reference>
<organism>
    <name type="scientific">Mycobacterium sp. (strain MCS)</name>
    <dbReference type="NCBI Taxonomy" id="164756"/>
    <lineage>
        <taxon>Bacteria</taxon>
        <taxon>Bacillati</taxon>
        <taxon>Actinomycetota</taxon>
        <taxon>Actinomycetes</taxon>
        <taxon>Mycobacteriales</taxon>
        <taxon>Mycobacteriaceae</taxon>
        <taxon>Mycobacterium</taxon>
    </lineage>
</organism>
<keyword id="KW-0687">Ribonucleoprotein</keyword>
<keyword id="KW-0689">Ribosomal protein</keyword>
<keyword id="KW-0694">RNA-binding</keyword>
<keyword id="KW-0699">rRNA-binding</keyword>
<feature type="chain" id="PRO_0000270687" description="Large ribosomal subunit protein bL21">
    <location>
        <begin position="1"/>
        <end position="103"/>
    </location>
</feature>
<gene>
    <name evidence="1" type="primary">rplU</name>
    <name type="ordered locus">Mmcs_3550</name>
</gene>
<comment type="function">
    <text evidence="1">This protein binds to 23S rRNA in the presence of protein L20.</text>
</comment>
<comment type="subunit">
    <text evidence="1">Part of the 50S ribosomal subunit. Contacts protein L20.</text>
</comment>
<comment type="similarity">
    <text evidence="1">Belongs to the bacterial ribosomal protein bL21 family.</text>
</comment>
<name>RL21_MYCSS</name>
<evidence type="ECO:0000255" key="1">
    <source>
        <dbReference type="HAMAP-Rule" id="MF_01363"/>
    </source>
</evidence>
<evidence type="ECO:0000305" key="2"/>
<dbReference type="EMBL" id="CP000384">
    <property type="protein sequence ID" value="ABG09657.1"/>
    <property type="molecule type" value="Genomic_DNA"/>
</dbReference>
<dbReference type="SMR" id="Q1B627"/>
<dbReference type="KEGG" id="mmc:Mmcs_3550"/>
<dbReference type="HOGENOM" id="CLU_061463_3_0_11"/>
<dbReference type="BioCyc" id="MSP164756:G1G6O-3621-MONOMER"/>
<dbReference type="GO" id="GO:0005737">
    <property type="term" value="C:cytoplasm"/>
    <property type="evidence" value="ECO:0007669"/>
    <property type="project" value="UniProtKB-ARBA"/>
</dbReference>
<dbReference type="GO" id="GO:1990904">
    <property type="term" value="C:ribonucleoprotein complex"/>
    <property type="evidence" value="ECO:0007669"/>
    <property type="project" value="UniProtKB-KW"/>
</dbReference>
<dbReference type="GO" id="GO:0005840">
    <property type="term" value="C:ribosome"/>
    <property type="evidence" value="ECO:0007669"/>
    <property type="project" value="UniProtKB-KW"/>
</dbReference>
<dbReference type="GO" id="GO:0019843">
    <property type="term" value="F:rRNA binding"/>
    <property type="evidence" value="ECO:0007669"/>
    <property type="project" value="UniProtKB-UniRule"/>
</dbReference>
<dbReference type="GO" id="GO:0003735">
    <property type="term" value="F:structural constituent of ribosome"/>
    <property type="evidence" value="ECO:0007669"/>
    <property type="project" value="InterPro"/>
</dbReference>
<dbReference type="GO" id="GO:0006412">
    <property type="term" value="P:translation"/>
    <property type="evidence" value="ECO:0007669"/>
    <property type="project" value="UniProtKB-UniRule"/>
</dbReference>
<dbReference type="HAMAP" id="MF_01363">
    <property type="entry name" value="Ribosomal_bL21"/>
    <property type="match status" value="1"/>
</dbReference>
<dbReference type="InterPro" id="IPR028909">
    <property type="entry name" value="bL21-like"/>
</dbReference>
<dbReference type="InterPro" id="IPR036164">
    <property type="entry name" value="bL21-like_sf"/>
</dbReference>
<dbReference type="InterPro" id="IPR001787">
    <property type="entry name" value="Ribosomal_bL21"/>
</dbReference>
<dbReference type="InterPro" id="IPR018258">
    <property type="entry name" value="Ribosomal_bL21_CS"/>
</dbReference>
<dbReference type="NCBIfam" id="TIGR00061">
    <property type="entry name" value="L21"/>
    <property type="match status" value="1"/>
</dbReference>
<dbReference type="PANTHER" id="PTHR21349">
    <property type="entry name" value="50S RIBOSOMAL PROTEIN L21"/>
    <property type="match status" value="1"/>
</dbReference>
<dbReference type="PANTHER" id="PTHR21349:SF0">
    <property type="entry name" value="LARGE RIBOSOMAL SUBUNIT PROTEIN BL21M"/>
    <property type="match status" value="1"/>
</dbReference>
<dbReference type="Pfam" id="PF00829">
    <property type="entry name" value="Ribosomal_L21p"/>
    <property type="match status" value="1"/>
</dbReference>
<dbReference type="SUPFAM" id="SSF141091">
    <property type="entry name" value="L21p-like"/>
    <property type="match status" value="1"/>
</dbReference>
<dbReference type="PROSITE" id="PS01169">
    <property type="entry name" value="RIBOSOMAL_L21"/>
    <property type="match status" value="1"/>
</dbReference>
<sequence length="103" mass="11048">MASYAIVKTGGKQYKVAVGDVVKVEKLDSEPGASVSLPVALVVDGANVTSKAEDLAKVAVTGEVLEHTKGPKIRIHKFKNKTGYHKRQGHRQQLTVLKVTGIK</sequence>